<name>RL16_MYCSK</name>
<accession>A1UBP3</accession>
<dbReference type="EMBL" id="CP000518">
    <property type="protein sequence ID" value="ABL90251.1"/>
    <property type="molecule type" value="Genomic_DNA"/>
</dbReference>
<dbReference type="SMR" id="A1UBP3"/>
<dbReference type="STRING" id="189918.Mkms_1037"/>
<dbReference type="KEGG" id="mkm:Mkms_1037"/>
<dbReference type="HOGENOM" id="CLU_078858_2_1_11"/>
<dbReference type="OrthoDB" id="9802589at2"/>
<dbReference type="GO" id="GO:0022625">
    <property type="term" value="C:cytosolic large ribosomal subunit"/>
    <property type="evidence" value="ECO:0007669"/>
    <property type="project" value="TreeGrafter"/>
</dbReference>
<dbReference type="GO" id="GO:0019843">
    <property type="term" value="F:rRNA binding"/>
    <property type="evidence" value="ECO:0007669"/>
    <property type="project" value="UniProtKB-UniRule"/>
</dbReference>
<dbReference type="GO" id="GO:0003735">
    <property type="term" value="F:structural constituent of ribosome"/>
    <property type="evidence" value="ECO:0007669"/>
    <property type="project" value="InterPro"/>
</dbReference>
<dbReference type="GO" id="GO:0000049">
    <property type="term" value="F:tRNA binding"/>
    <property type="evidence" value="ECO:0007669"/>
    <property type="project" value="UniProtKB-KW"/>
</dbReference>
<dbReference type="GO" id="GO:0006412">
    <property type="term" value="P:translation"/>
    <property type="evidence" value="ECO:0007669"/>
    <property type="project" value="UniProtKB-UniRule"/>
</dbReference>
<dbReference type="CDD" id="cd01433">
    <property type="entry name" value="Ribosomal_L16_L10e"/>
    <property type="match status" value="1"/>
</dbReference>
<dbReference type="FunFam" id="3.90.1170.10:FF:000001">
    <property type="entry name" value="50S ribosomal protein L16"/>
    <property type="match status" value="1"/>
</dbReference>
<dbReference type="Gene3D" id="3.90.1170.10">
    <property type="entry name" value="Ribosomal protein L10e/L16"/>
    <property type="match status" value="1"/>
</dbReference>
<dbReference type="HAMAP" id="MF_01342">
    <property type="entry name" value="Ribosomal_uL16"/>
    <property type="match status" value="1"/>
</dbReference>
<dbReference type="InterPro" id="IPR047873">
    <property type="entry name" value="Ribosomal_uL16"/>
</dbReference>
<dbReference type="InterPro" id="IPR000114">
    <property type="entry name" value="Ribosomal_uL16_bact-type"/>
</dbReference>
<dbReference type="InterPro" id="IPR020798">
    <property type="entry name" value="Ribosomal_uL16_CS"/>
</dbReference>
<dbReference type="InterPro" id="IPR016180">
    <property type="entry name" value="Ribosomal_uL16_dom"/>
</dbReference>
<dbReference type="InterPro" id="IPR036920">
    <property type="entry name" value="Ribosomal_uL16_sf"/>
</dbReference>
<dbReference type="NCBIfam" id="TIGR01164">
    <property type="entry name" value="rplP_bact"/>
    <property type="match status" value="1"/>
</dbReference>
<dbReference type="PANTHER" id="PTHR12220">
    <property type="entry name" value="50S/60S RIBOSOMAL PROTEIN L16"/>
    <property type="match status" value="1"/>
</dbReference>
<dbReference type="PANTHER" id="PTHR12220:SF13">
    <property type="entry name" value="LARGE RIBOSOMAL SUBUNIT PROTEIN UL16M"/>
    <property type="match status" value="1"/>
</dbReference>
<dbReference type="Pfam" id="PF00252">
    <property type="entry name" value="Ribosomal_L16"/>
    <property type="match status" value="1"/>
</dbReference>
<dbReference type="PRINTS" id="PR00060">
    <property type="entry name" value="RIBOSOMALL16"/>
</dbReference>
<dbReference type="SUPFAM" id="SSF54686">
    <property type="entry name" value="Ribosomal protein L16p/L10e"/>
    <property type="match status" value="1"/>
</dbReference>
<dbReference type="PROSITE" id="PS00586">
    <property type="entry name" value="RIBOSOMAL_L16_1"/>
    <property type="match status" value="1"/>
</dbReference>
<dbReference type="PROSITE" id="PS00701">
    <property type="entry name" value="RIBOSOMAL_L16_2"/>
    <property type="match status" value="1"/>
</dbReference>
<reference key="1">
    <citation type="submission" date="2006-12" db="EMBL/GenBank/DDBJ databases">
        <title>Complete sequence of chromosome of Mycobacterium sp. KMS.</title>
        <authorList>
            <consortium name="US DOE Joint Genome Institute"/>
            <person name="Copeland A."/>
            <person name="Lucas S."/>
            <person name="Lapidus A."/>
            <person name="Barry K."/>
            <person name="Detter J.C."/>
            <person name="Glavina del Rio T."/>
            <person name="Hammon N."/>
            <person name="Israni S."/>
            <person name="Dalin E."/>
            <person name="Tice H."/>
            <person name="Pitluck S."/>
            <person name="Kiss H."/>
            <person name="Brettin T."/>
            <person name="Bruce D."/>
            <person name="Han C."/>
            <person name="Tapia R."/>
            <person name="Gilna P."/>
            <person name="Schmutz J."/>
            <person name="Larimer F."/>
            <person name="Land M."/>
            <person name="Hauser L."/>
            <person name="Kyrpides N."/>
            <person name="Mikhailova N."/>
            <person name="Miller C.D."/>
            <person name="Richardson P."/>
        </authorList>
    </citation>
    <scope>NUCLEOTIDE SEQUENCE [LARGE SCALE GENOMIC DNA]</scope>
    <source>
        <strain>KMS</strain>
    </source>
</reference>
<gene>
    <name evidence="1" type="primary">rplP</name>
    <name type="ordered locus">Mkms_1037</name>
</gene>
<organism>
    <name type="scientific">Mycobacterium sp. (strain KMS)</name>
    <dbReference type="NCBI Taxonomy" id="189918"/>
    <lineage>
        <taxon>Bacteria</taxon>
        <taxon>Bacillati</taxon>
        <taxon>Actinomycetota</taxon>
        <taxon>Actinomycetes</taxon>
        <taxon>Mycobacteriales</taxon>
        <taxon>Mycobacteriaceae</taxon>
        <taxon>Mycobacterium</taxon>
    </lineage>
</organism>
<proteinExistence type="inferred from homology"/>
<evidence type="ECO:0000255" key="1">
    <source>
        <dbReference type="HAMAP-Rule" id="MF_01342"/>
    </source>
</evidence>
<evidence type="ECO:0000256" key="2">
    <source>
        <dbReference type="SAM" id="MobiDB-lite"/>
    </source>
</evidence>
<evidence type="ECO:0000305" key="3"/>
<protein>
    <recommendedName>
        <fullName evidence="1">Large ribosomal subunit protein uL16</fullName>
    </recommendedName>
    <alternativeName>
        <fullName evidence="3">50S ribosomal protein L16</fullName>
    </alternativeName>
</protein>
<feature type="chain" id="PRO_1000054656" description="Large ribosomal subunit protein uL16">
    <location>
        <begin position="1"/>
        <end position="138"/>
    </location>
</feature>
<feature type="region of interest" description="Disordered" evidence="2">
    <location>
        <begin position="1"/>
        <end position="23"/>
    </location>
</feature>
<feature type="compositionally biased region" description="Basic residues" evidence="2">
    <location>
        <begin position="1"/>
        <end position="17"/>
    </location>
</feature>
<sequence>MLIPRKVKHRKQHHPRQRGIASGGTTVSFGDYGIQALEHAYITNRQIESARIAINRHIKRGGKVWINIFPDRPLTKKPAETRMGSGKGSPEWWVANVKPGRVLFELSYPDEKTARDALTRAIHKLPIKARIVTREENF</sequence>
<comment type="function">
    <text evidence="1">Binds 23S rRNA and is also seen to make contacts with the A and possibly P site tRNAs.</text>
</comment>
<comment type="subunit">
    <text evidence="1">Part of the 50S ribosomal subunit.</text>
</comment>
<comment type="similarity">
    <text evidence="1">Belongs to the universal ribosomal protein uL16 family.</text>
</comment>
<keyword id="KW-0687">Ribonucleoprotein</keyword>
<keyword id="KW-0689">Ribosomal protein</keyword>
<keyword id="KW-0694">RNA-binding</keyword>
<keyword id="KW-0699">rRNA-binding</keyword>
<keyword id="KW-0820">tRNA-binding</keyword>